<sequence length="440" mass="49075">MAVTVETLDKLERKMTLSLPVTLIQSEVDMRLRRMARTVKMDGFRPGKVPMAVVARRYGDAVQYEVLTNKVGEAFTVAANEANLRVAGRPRITETQGTAEGHVTFDAIFEVFPEVRIADLANVEIEKLSTEVTEASIDKTLQGLRKQRRSFAQRAHDAPAQDGDGVTVDFEGKIDGEPFANGKAENFRFVIGEGPMPKEFEDAVRGMKSGESKTFPLAFPTQYHGQEVAGKTADFLVTVKKIESAHLPEVGEALARSLGSADGSIEGLRADIRKTLEREIRSHLRARNRRAVMNALLANADLELPKASVQDEIARLKANAYADLKQRGVKDPERLEIPEDKVRPTAERNVRLRLIFSEMVRAHGLRAKPEQVRAYVEELAASYEKPAEMVRGYYGDRRRMLEIESSVSEDNVTEFVFARAKVVARTISVDELLNPKDPKD</sequence>
<reference key="1">
    <citation type="submission" date="2006-12" db="EMBL/GenBank/DDBJ databases">
        <title>Complete sequence of chromosome 1 of Verminephrobacter eiseniae EF01-2.</title>
        <authorList>
            <person name="Copeland A."/>
            <person name="Lucas S."/>
            <person name="Lapidus A."/>
            <person name="Barry K."/>
            <person name="Detter J.C."/>
            <person name="Glavina del Rio T."/>
            <person name="Dalin E."/>
            <person name="Tice H."/>
            <person name="Pitluck S."/>
            <person name="Chertkov O."/>
            <person name="Brettin T."/>
            <person name="Bruce D."/>
            <person name="Han C."/>
            <person name="Tapia R."/>
            <person name="Gilna P."/>
            <person name="Schmutz J."/>
            <person name="Larimer F."/>
            <person name="Land M."/>
            <person name="Hauser L."/>
            <person name="Kyrpides N."/>
            <person name="Kim E."/>
            <person name="Stahl D."/>
            <person name="Richardson P."/>
        </authorList>
    </citation>
    <scope>NUCLEOTIDE SEQUENCE [LARGE SCALE GENOMIC DNA]</scope>
    <source>
        <strain>EF01-2</strain>
    </source>
</reference>
<proteinExistence type="inferred from homology"/>
<feature type="chain" id="PRO_1000022779" description="Trigger factor">
    <location>
        <begin position="1"/>
        <end position="440"/>
    </location>
</feature>
<feature type="domain" description="PPIase FKBP-type" evidence="1">
    <location>
        <begin position="163"/>
        <end position="248"/>
    </location>
</feature>
<protein>
    <recommendedName>
        <fullName evidence="1">Trigger factor</fullName>
        <shortName evidence="1">TF</shortName>
        <ecNumber evidence="1">5.2.1.8</ecNumber>
    </recommendedName>
    <alternativeName>
        <fullName evidence="1">PPIase</fullName>
    </alternativeName>
</protein>
<name>TIG_VEREI</name>
<evidence type="ECO:0000255" key="1">
    <source>
        <dbReference type="HAMAP-Rule" id="MF_00303"/>
    </source>
</evidence>
<organism>
    <name type="scientific">Verminephrobacter eiseniae (strain EF01-2)</name>
    <dbReference type="NCBI Taxonomy" id="391735"/>
    <lineage>
        <taxon>Bacteria</taxon>
        <taxon>Pseudomonadati</taxon>
        <taxon>Pseudomonadota</taxon>
        <taxon>Betaproteobacteria</taxon>
        <taxon>Burkholderiales</taxon>
        <taxon>Comamonadaceae</taxon>
        <taxon>Verminephrobacter</taxon>
    </lineage>
</organism>
<keyword id="KW-0131">Cell cycle</keyword>
<keyword id="KW-0132">Cell division</keyword>
<keyword id="KW-0143">Chaperone</keyword>
<keyword id="KW-0963">Cytoplasm</keyword>
<keyword id="KW-0413">Isomerase</keyword>
<keyword id="KW-1185">Reference proteome</keyword>
<keyword id="KW-0697">Rotamase</keyword>
<accession>A1WR16</accession>
<dbReference type="EC" id="5.2.1.8" evidence="1"/>
<dbReference type="EMBL" id="CP000542">
    <property type="protein sequence ID" value="ABM60073.1"/>
    <property type="molecule type" value="Genomic_DNA"/>
</dbReference>
<dbReference type="RefSeq" id="WP_011812059.1">
    <property type="nucleotide sequence ID" value="NC_008786.1"/>
</dbReference>
<dbReference type="SMR" id="A1WR16"/>
<dbReference type="STRING" id="391735.Veis_4370"/>
<dbReference type="GeneID" id="76462685"/>
<dbReference type="KEGG" id="vei:Veis_4370"/>
<dbReference type="eggNOG" id="COG0544">
    <property type="taxonomic scope" value="Bacteria"/>
</dbReference>
<dbReference type="HOGENOM" id="CLU_033058_2_0_4"/>
<dbReference type="OrthoDB" id="9767721at2"/>
<dbReference type="Proteomes" id="UP000000374">
    <property type="component" value="Chromosome"/>
</dbReference>
<dbReference type="GO" id="GO:0005737">
    <property type="term" value="C:cytoplasm"/>
    <property type="evidence" value="ECO:0007669"/>
    <property type="project" value="UniProtKB-SubCell"/>
</dbReference>
<dbReference type="GO" id="GO:0003755">
    <property type="term" value="F:peptidyl-prolyl cis-trans isomerase activity"/>
    <property type="evidence" value="ECO:0007669"/>
    <property type="project" value="UniProtKB-UniRule"/>
</dbReference>
<dbReference type="GO" id="GO:0044183">
    <property type="term" value="F:protein folding chaperone"/>
    <property type="evidence" value="ECO:0007669"/>
    <property type="project" value="TreeGrafter"/>
</dbReference>
<dbReference type="GO" id="GO:0043022">
    <property type="term" value="F:ribosome binding"/>
    <property type="evidence" value="ECO:0007669"/>
    <property type="project" value="TreeGrafter"/>
</dbReference>
<dbReference type="GO" id="GO:0051083">
    <property type="term" value="P:'de novo' cotranslational protein folding"/>
    <property type="evidence" value="ECO:0007669"/>
    <property type="project" value="TreeGrafter"/>
</dbReference>
<dbReference type="GO" id="GO:0051301">
    <property type="term" value="P:cell division"/>
    <property type="evidence" value="ECO:0007669"/>
    <property type="project" value="UniProtKB-KW"/>
</dbReference>
<dbReference type="GO" id="GO:0061077">
    <property type="term" value="P:chaperone-mediated protein folding"/>
    <property type="evidence" value="ECO:0007669"/>
    <property type="project" value="TreeGrafter"/>
</dbReference>
<dbReference type="GO" id="GO:0015031">
    <property type="term" value="P:protein transport"/>
    <property type="evidence" value="ECO:0007669"/>
    <property type="project" value="UniProtKB-UniRule"/>
</dbReference>
<dbReference type="GO" id="GO:0043335">
    <property type="term" value="P:protein unfolding"/>
    <property type="evidence" value="ECO:0007669"/>
    <property type="project" value="TreeGrafter"/>
</dbReference>
<dbReference type="FunFam" id="3.10.50.40:FF:000001">
    <property type="entry name" value="Trigger factor"/>
    <property type="match status" value="1"/>
</dbReference>
<dbReference type="Gene3D" id="3.10.50.40">
    <property type="match status" value="1"/>
</dbReference>
<dbReference type="Gene3D" id="3.30.70.1050">
    <property type="entry name" value="Trigger factor ribosome-binding domain"/>
    <property type="match status" value="1"/>
</dbReference>
<dbReference type="Gene3D" id="1.10.3120.10">
    <property type="entry name" value="Trigger factor, C-terminal domain"/>
    <property type="match status" value="1"/>
</dbReference>
<dbReference type="HAMAP" id="MF_00303">
    <property type="entry name" value="Trigger_factor_Tig"/>
    <property type="match status" value="1"/>
</dbReference>
<dbReference type="InterPro" id="IPR046357">
    <property type="entry name" value="PPIase_dom_sf"/>
</dbReference>
<dbReference type="InterPro" id="IPR001179">
    <property type="entry name" value="PPIase_FKBP_dom"/>
</dbReference>
<dbReference type="InterPro" id="IPR005215">
    <property type="entry name" value="Trig_fac"/>
</dbReference>
<dbReference type="InterPro" id="IPR008880">
    <property type="entry name" value="Trigger_fac_C"/>
</dbReference>
<dbReference type="InterPro" id="IPR037041">
    <property type="entry name" value="Trigger_fac_C_sf"/>
</dbReference>
<dbReference type="InterPro" id="IPR008881">
    <property type="entry name" value="Trigger_fac_ribosome-bd_bac"/>
</dbReference>
<dbReference type="InterPro" id="IPR036611">
    <property type="entry name" value="Trigger_fac_ribosome-bd_sf"/>
</dbReference>
<dbReference type="InterPro" id="IPR027304">
    <property type="entry name" value="Trigger_fact/SurA_dom_sf"/>
</dbReference>
<dbReference type="NCBIfam" id="TIGR00115">
    <property type="entry name" value="tig"/>
    <property type="match status" value="1"/>
</dbReference>
<dbReference type="PANTHER" id="PTHR30560">
    <property type="entry name" value="TRIGGER FACTOR CHAPERONE AND PEPTIDYL-PROLYL CIS/TRANS ISOMERASE"/>
    <property type="match status" value="1"/>
</dbReference>
<dbReference type="PANTHER" id="PTHR30560:SF3">
    <property type="entry name" value="TRIGGER FACTOR-LIKE PROTEIN TIG, CHLOROPLASTIC"/>
    <property type="match status" value="1"/>
</dbReference>
<dbReference type="Pfam" id="PF00254">
    <property type="entry name" value="FKBP_C"/>
    <property type="match status" value="1"/>
</dbReference>
<dbReference type="Pfam" id="PF05698">
    <property type="entry name" value="Trigger_C"/>
    <property type="match status" value="1"/>
</dbReference>
<dbReference type="Pfam" id="PF05697">
    <property type="entry name" value="Trigger_N"/>
    <property type="match status" value="1"/>
</dbReference>
<dbReference type="PIRSF" id="PIRSF003095">
    <property type="entry name" value="Trigger_factor"/>
    <property type="match status" value="1"/>
</dbReference>
<dbReference type="SUPFAM" id="SSF54534">
    <property type="entry name" value="FKBP-like"/>
    <property type="match status" value="1"/>
</dbReference>
<dbReference type="SUPFAM" id="SSF109998">
    <property type="entry name" value="Triger factor/SurA peptide-binding domain-like"/>
    <property type="match status" value="1"/>
</dbReference>
<dbReference type="SUPFAM" id="SSF102735">
    <property type="entry name" value="Trigger factor ribosome-binding domain"/>
    <property type="match status" value="1"/>
</dbReference>
<dbReference type="PROSITE" id="PS50059">
    <property type="entry name" value="FKBP_PPIASE"/>
    <property type="match status" value="1"/>
</dbReference>
<comment type="function">
    <text evidence="1">Involved in protein export. Acts as a chaperone by maintaining the newly synthesized protein in an open conformation. Functions as a peptidyl-prolyl cis-trans isomerase.</text>
</comment>
<comment type="catalytic activity">
    <reaction evidence="1">
        <text>[protein]-peptidylproline (omega=180) = [protein]-peptidylproline (omega=0)</text>
        <dbReference type="Rhea" id="RHEA:16237"/>
        <dbReference type="Rhea" id="RHEA-COMP:10747"/>
        <dbReference type="Rhea" id="RHEA-COMP:10748"/>
        <dbReference type="ChEBI" id="CHEBI:83833"/>
        <dbReference type="ChEBI" id="CHEBI:83834"/>
        <dbReference type="EC" id="5.2.1.8"/>
    </reaction>
</comment>
<comment type="subcellular location">
    <subcellularLocation>
        <location>Cytoplasm</location>
    </subcellularLocation>
    <text evidence="1">About half TF is bound to the ribosome near the polypeptide exit tunnel while the other half is free in the cytoplasm.</text>
</comment>
<comment type="domain">
    <text evidence="1">Consists of 3 domains; the N-terminus binds the ribosome, the middle domain has PPIase activity, while the C-terminus has intrinsic chaperone activity on its own.</text>
</comment>
<comment type="similarity">
    <text evidence="1">Belongs to the FKBP-type PPIase family. Tig subfamily.</text>
</comment>
<gene>
    <name evidence="1" type="primary">tig</name>
    <name type="ordered locus">Veis_4370</name>
</gene>